<keyword id="KW-0150">Chloroplast</keyword>
<keyword id="KW-0934">Plastid</keyword>
<keyword id="KW-0687">Ribonucleoprotein</keyword>
<keyword id="KW-0689">Ribosomal protein</keyword>
<keyword id="KW-0694">RNA-binding</keyword>
<keyword id="KW-0699">rRNA-binding</keyword>
<reference key="1">
    <citation type="journal article" date="2006" name="Mol. Biol. Evol.">
        <title>The complete chloroplast genome sequence of Pelargonium x hortorum: organization and evolution of the largest and most highly rearranged chloroplast genome of land plants.</title>
        <authorList>
            <person name="Chumley T.W."/>
            <person name="Palmer J.D."/>
            <person name="Mower J.P."/>
            <person name="Fourcade H.M."/>
            <person name="Calie P.J."/>
            <person name="Boore J.L."/>
            <person name="Jansen R.K."/>
        </authorList>
    </citation>
    <scope>NUCLEOTIDE SEQUENCE [LARGE SCALE GENOMIC DNA]</scope>
    <source>
        <strain>cv. Ringo White</strain>
    </source>
</reference>
<name>RR18_PELHO</name>
<dbReference type="EMBL" id="DQ897681">
    <property type="protein sequence ID" value="ABI17367.1"/>
    <property type="molecule type" value="Genomic_DNA"/>
</dbReference>
<dbReference type="EMBL" id="DQ897681">
    <property type="protein sequence ID" value="ABI17271.1"/>
    <property type="molecule type" value="Genomic_DNA"/>
</dbReference>
<dbReference type="RefSeq" id="YP_784080.1">
    <property type="nucleotide sequence ID" value="NC_008454.1"/>
</dbReference>
<dbReference type="RefSeq" id="YP_784176.1">
    <property type="nucleotide sequence ID" value="NC_008454.1"/>
</dbReference>
<dbReference type="SMR" id="Q06FK5"/>
<dbReference type="GeneID" id="4362853"/>
<dbReference type="GeneID" id="4362901"/>
<dbReference type="GO" id="GO:0009507">
    <property type="term" value="C:chloroplast"/>
    <property type="evidence" value="ECO:0007669"/>
    <property type="project" value="UniProtKB-SubCell"/>
</dbReference>
<dbReference type="GO" id="GO:0005763">
    <property type="term" value="C:mitochondrial small ribosomal subunit"/>
    <property type="evidence" value="ECO:0007669"/>
    <property type="project" value="TreeGrafter"/>
</dbReference>
<dbReference type="GO" id="GO:0070181">
    <property type="term" value="F:small ribosomal subunit rRNA binding"/>
    <property type="evidence" value="ECO:0007669"/>
    <property type="project" value="TreeGrafter"/>
</dbReference>
<dbReference type="GO" id="GO:0003735">
    <property type="term" value="F:structural constituent of ribosome"/>
    <property type="evidence" value="ECO:0007669"/>
    <property type="project" value="InterPro"/>
</dbReference>
<dbReference type="GO" id="GO:0006412">
    <property type="term" value="P:translation"/>
    <property type="evidence" value="ECO:0007669"/>
    <property type="project" value="UniProtKB-UniRule"/>
</dbReference>
<dbReference type="FunFam" id="4.10.640.10:FF:000002">
    <property type="entry name" value="30S ribosomal protein S18, chloroplastic"/>
    <property type="match status" value="1"/>
</dbReference>
<dbReference type="Gene3D" id="4.10.640.10">
    <property type="entry name" value="Ribosomal protein S18"/>
    <property type="match status" value="1"/>
</dbReference>
<dbReference type="HAMAP" id="MF_00270">
    <property type="entry name" value="Ribosomal_bS18"/>
    <property type="match status" value="1"/>
</dbReference>
<dbReference type="InterPro" id="IPR001648">
    <property type="entry name" value="Ribosomal_bS18"/>
</dbReference>
<dbReference type="InterPro" id="IPR036870">
    <property type="entry name" value="Ribosomal_bS18_sf"/>
</dbReference>
<dbReference type="NCBIfam" id="TIGR00165">
    <property type="entry name" value="S18"/>
    <property type="match status" value="1"/>
</dbReference>
<dbReference type="PANTHER" id="PTHR13479">
    <property type="entry name" value="30S RIBOSOMAL PROTEIN S18"/>
    <property type="match status" value="1"/>
</dbReference>
<dbReference type="PANTHER" id="PTHR13479:SF40">
    <property type="entry name" value="SMALL RIBOSOMAL SUBUNIT PROTEIN BS18M"/>
    <property type="match status" value="1"/>
</dbReference>
<dbReference type="Pfam" id="PF01084">
    <property type="entry name" value="Ribosomal_S18"/>
    <property type="match status" value="1"/>
</dbReference>
<dbReference type="PRINTS" id="PR00974">
    <property type="entry name" value="RIBOSOMALS18"/>
</dbReference>
<dbReference type="SUPFAM" id="SSF46911">
    <property type="entry name" value="Ribosomal protein S18"/>
    <property type="match status" value="1"/>
</dbReference>
<evidence type="ECO:0000255" key="1">
    <source>
        <dbReference type="HAMAP-Rule" id="MF_00270"/>
    </source>
</evidence>
<evidence type="ECO:0000256" key="2">
    <source>
        <dbReference type="SAM" id="MobiDB-lite"/>
    </source>
</evidence>
<evidence type="ECO:0000305" key="3"/>
<comment type="subunit">
    <text>Part of the 30S ribosomal subunit.</text>
</comment>
<comment type="subcellular location">
    <subcellularLocation>
        <location>Plastid</location>
        <location>Chloroplast</location>
    </subcellularLocation>
</comment>
<comment type="similarity">
    <text evidence="1">Belongs to the bacterial ribosomal protein bS18 family.</text>
</comment>
<sequence>MEIEESNLKWLRTEFIATKKPPEPKAPLQPPLPPSKRKGKPPKSPRRRSSRIKPGDLIDYRNISLIGRFISQQGKILSRRVNRVTLKQQRRLTIAIKQARILSSLPFHATDQLFKIKRKIKRRESTARKKRKKGFRKRPKK</sequence>
<gene>
    <name evidence="1" type="primary">rps18</name>
</gene>
<accession>Q06FK5</accession>
<geneLocation type="chloroplast"/>
<protein>
    <recommendedName>
        <fullName evidence="1">Small ribosomal subunit protein bS18c</fullName>
    </recommendedName>
    <alternativeName>
        <fullName evidence="3">30S ribosomal protein S18, chloroplastic</fullName>
    </alternativeName>
</protein>
<feature type="chain" id="PRO_0000276881" description="Small ribosomal subunit protein bS18c">
    <location>
        <begin position="1"/>
        <end position="141"/>
    </location>
</feature>
<feature type="region of interest" description="Disordered" evidence="2">
    <location>
        <begin position="14"/>
        <end position="55"/>
    </location>
</feature>
<feature type="region of interest" description="Disordered" evidence="2">
    <location>
        <begin position="120"/>
        <end position="141"/>
    </location>
</feature>
<feature type="compositionally biased region" description="Pro residues" evidence="2">
    <location>
        <begin position="24"/>
        <end position="34"/>
    </location>
</feature>
<feature type="compositionally biased region" description="Basic residues" evidence="2">
    <location>
        <begin position="35"/>
        <end position="51"/>
    </location>
</feature>
<proteinExistence type="inferred from homology"/>
<organism>
    <name type="scientific">Pelargonium hortorum</name>
    <name type="common">Common geranium</name>
    <name type="synonym">Pelargonium inquinans x Pelargonium zonale</name>
    <dbReference type="NCBI Taxonomy" id="4031"/>
    <lineage>
        <taxon>Eukaryota</taxon>
        <taxon>Viridiplantae</taxon>
        <taxon>Streptophyta</taxon>
        <taxon>Embryophyta</taxon>
        <taxon>Tracheophyta</taxon>
        <taxon>Spermatophyta</taxon>
        <taxon>Magnoliopsida</taxon>
        <taxon>eudicotyledons</taxon>
        <taxon>Gunneridae</taxon>
        <taxon>Pentapetalae</taxon>
        <taxon>rosids</taxon>
        <taxon>malvids</taxon>
        <taxon>Geraniales</taxon>
        <taxon>Geraniaceae</taxon>
        <taxon>Pelargonium</taxon>
    </lineage>
</organism>